<feature type="chain" id="PRO_1000059570" description="Chaperone protein DnaK">
    <location>
        <begin position="1"/>
        <end position="641"/>
    </location>
</feature>
<feature type="region of interest" description="Disordered" evidence="2">
    <location>
        <begin position="596"/>
        <end position="641"/>
    </location>
</feature>
<feature type="compositionally biased region" description="Gly residues" evidence="2">
    <location>
        <begin position="606"/>
        <end position="623"/>
    </location>
</feature>
<feature type="compositionally biased region" description="Acidic residues" evidence="2">
    <location>
        <begin position="631"/>
        <end position="641"/>
    </location>
</feature>
<feature type="modified residue" description="Phosphothreonine; by autocatalysis" evidence="1">
    <location>
        <position position="197"/>
    </location>
</feature>
<evidence type="ECO:0000255" key="1">
    <source>
        <dbReference type="HAMAP-Rule" id="MF_00332"/>
    </source>
</evidence>
<evidence type="ECO:0000256" key="2">
    <source>
        <dbReference type="SAM" id="MobiDB-lite"/>
    </source>
</evidence>
<sequence>MSKVIGIDLGTTNSCVAVMEGSEPTVIPNAEGKRTTPSVIAFVEGGEIKVGDPAKRQAVTNPTKTISSIKRFMGNKYSESSREAGRVPYTVKKGDNDTPRVEIDGRLYTPQELSAMVLQKMKKTAEDYLGQDVTEAVITVPAYFNDSQRHATKEAGEIAGLKVRRIINEPTAAALAYGLDKKSQDQKIAVYDLGGGTFDISILELGDGVFEVLSTNGDTHLGGDDFDEVLIDYLADNFKKAEDIDLRKDPMALQRLKEAAEKAKIELSSSSQTEINLPYVTATSSGPKHLVETISRSKFEQLAAELVTRSMEPVKKALSDAGLSKSDIDEVILVGGSTRIPKIQEEVEAFFGKKPSKGVNPDEVVAIGAAIQGGVLTGDVKDVLLLDVTPLSLGIETMGGVNTKLIESNTTIPTKKSQTFSTAADNQPSVEIHVLQGERPMATDNKTIGRFHLDGIPPSPRGTPQIEVTFDIDANGIIKVSATDKATGKSQDIRIEASSGLTEEEIEKMKKEAEANADADKQTKEKVDKLNEADAMIFQTEKQLKEFGDKISEDKKKPVEEALEELKKAYETKELDQITPALDKINEAWKTASEEMYKAQAEAQGGANGQPGGPQQGATGAEGGDAKSGDDVEDVDFEEVK</sequence>
<dbReference type="EMBL" id="CU207366">
    <property type="protein sequence ID" value="CAL67048.1"/>
    <property type="molecule type" value="Genomic_DNA"/>
</dbReference>
<dbReference type="RefSeq" id="WP_011709951.1">
    <property type="nucleotide sequence ID" value="NC_008571.1"/>
</dbReference>
<dbReference type="SMR" id="A0M353"/>
<dbReference type="STRING" id="411154.GFO_2083"/>
<dbReference type="KEGG" id="gfo:GFO_2083"/>
<dbReference type="eggNOG" id="COG0443">
    <property type="taxonomic scope" value="Bacteria"/>
</dbReference>
<dbReference type="HOGENOM" id="CLU_005965_2_4_10"/>
<dbReference type="OrthoDB" id="9766019at2"/>
<dbReference type="Proteomes" id="UP000000755">
    <property type="component" value="Chromosome"/>
</dbReference>
<dbReference type="GO" id="GO:0005524">
    <property type="term" value="F:ATP binding"/>
    <property type="evidence" value="ECO:0007669"/>
    <property type="project" value="UniProtKB-UniRule"/>
</dbReference>
<dbReference type="GO" id="GO:0140662">
    <property type="term" value="F:ATP-dependent protein folding chaperone"/>
    <property type="evidence" value="ECO:0007669"/>
    <property type="project" value="InterPro"/>
</dbReference>
<dbReference type="GO" id="GO:0051082">
    <property type="term" value="F:unfolded protein binding"/>
    <property type="evidence" value="ECO:0007669"/>
    <property type="project" value="InterPro"/>
</dbReference>
<dbReference type="CDD" id="cd10234">
    <property type="entry name" value="ASKHA_NBD_HSP70_DnaK-like"/>
    <property type="match status" value="1"/>
</dbReference>
<dbReference type="FunFam" id="2.60.34.10:FF:000014">
    <property type="entry name" value="Chaperone protein DnaK HSP70"/>
    <property type="match status" value="1"/>
</dbReference>
<dbReference type="FunFam" id="3.30.420.40:FF:000020">
    <property type="entry name" value="Chaperone protein HscA homolog"/>
    <property type="match status" value="1"/>
</dbReference>
<dbReference type="FunFam" id="1.20.1270.10:FF:000001">
    <property type="entry name" value="Molecular chaperone DnaK"/>
    <property type="match status" value="1"/>
</dbReference>
<dbReference type="FunFam" id="3.30.420.40:FF:000004">
    <property type="entry name" value="Molecular chaperone DnaK"/>
    <property type="match status" value="1"/>
</dbReference>
<dbReference type="FunFam" id="3.90.640.10:FF:000003">
    <property type="entry name" value="Molecular chaperone DnaK"/>
    <property type="match status" value="1"/>
</dbReference>
<dbReference type="Gene3D" id="1.20.1270.10">
    <property type="match status" value="1"/>
</dbReference>
<dbReference type="Gene3D" id="3.30.420.40">
    <property type="match status" value="2"/>
</dbReference>
<dbReference type="Gene3D" id="3.90.640.10">
    <property type="entry name" value="Actin, Chain A, domain 4"/>
    <property type="match status" value="1"/>
</dbReference>
<dbReference type="Gene3D" id="2.60.34.10">
    <property type="entry name" value="Substrate Binding Domain Of DNAk, Chain A, domain 1"/>
    <property type="match status" value="1"/>
</dbReference>
<dbReference type="HAMAP" id="MF_00332">
    <property type="entry name" value="DnaK"/>
    <property type="match status" value="1"/>
</dbReference>
<dbReference type="InterPro" id="IPR043129">
    <property type="entry name" value="ATPase_NBD"/>
</dbReference>
<dbReference type="InterPro" id="IPR012725">
    <property type="entry name" value="Chaperone_DnaK"/>
</dbReference>
<dbReference type="InterPro" id="IPR018181">
    <property type="entry name" value="Heat_shock_70_CS"/>
</dbReference>
<dbReference type="InterPro" id="IPR029048">
    <property type="entry name" value="HSP70_C_sf"/>
</dbReference>
<dbReference type="InterPro" id="IPR029047">
    <property type="entry name" value="HSP70_peptide-bd_sf"/>
</dbReference>
<dbReference type="InterPro" id="IPR013126">
    <property type="entry name" value="Hsp_70_fam"/>
</dbReference>
<dbReference type="NCBIfam" id="NF001413">
    <property type="entry name" value="PRK00290.1"/>
    <property type="match status" value="1"/>
</dbReference>
<dbReference type="NCBIfam" id="NF003520">
    <property type="entry name" value="PRK05183.1"/>
    <property type="match status" value="1"/>
</dbReference>
<dbReference type="NCBIfam" id="TIGR02350">
    <property type="entry name" value="prok_dnaK"/>
    <property type="match status" value="1"/>
</dbReference>
<dbReference type="PANTHER" id="PTHR19375">
    <property type="entry name" value="HEAT SHOCK PROTEIN 70KDA"/>
    <property type="match status" value="1"/>
</dbReference>
<dbReference type="Pfam" id="PF00012">
    <property type="entry name" value="HSP70"/>
    <property type="match status" value="1"/>
</dbReference>
<dbReference type="PRINTS" id="PR00301">
    <property type="entry name" value="HEATSHOCK70"/>
</dbReference>
<dbReference type="SUPFAM" id="SSF53067">
    <property type="entry name" value="Actin-like ATPase domain"/>
    <property type="match status" value="2"/>
</dbReference>
<dbReference type="SUPFAM" id="SSF100934">
    <property type="entry name" value="Heat shock protein 70kD (HSP70), C-terminal subdomain"/>
    <property type="match status" value="1"/>
</dbReference>
<dbReference type="SUPFAM" id="SSF100920">
    <property type="entry name" value="Heat shock protein 70kD (HSP70), peptide-binding domain"/>
    <property type="match status" value="1"/>
</dbReference>
<dbReference type="PROSITE" id="PS00297">
    <property type="entry name" value="HSP70_1"/>
    <property type="match status" value="1"/>
</dbReference>
<dbReference type="PROSITE" id="PS00329">
    <property type="entry name" value="HSP70_2"/>
    <property type="match status" value="1"/>
</dbReference>
<dbReference type="PROSITE" id="PS01036">
    <property type="entry name" value="HSP70_3"/>
    <property type="match status" value="1"/>
</dbReference>
<keyword id="KW-0067">ATP-binding</keyword>
<keyword id="KW-0143">Chaperone</keyword>
<keyword id="KW-0547">Nucleotide-binding</keyword>
<keyword id="KW-0597">Phosphoprotein</keyword>
<keyword id="KW-0346">Stress response</keyword>
<name>DNAK_CHRFK</name>
<protein>
    <recommendedName>
        <fullName evidence="1">Chaperone protein DnaK</fullName>
    </recommendedName>
    <alternativeName>
        <fullName evidence="1">HSP70</fullName>
    </alternativeName>
    <alternativeName>
        <fullName evidence="1">Heat shock 70 kDa protein</fullName>
    </alternativeName>
    <alternativeName>
        <fullName evidence="1">Heat shock protein 70</fullName>
    </alternativeName>
</protein>
<accession>A0M353</accession>
<organism>
    <name type="scientific">Christiangramia forsetii (strain DSM 17595 / CGMCC 1.15422 / KT0803)</name>
    <name type="common">Gramella forsetii</name>
    <dbReference type="NCBI Taxonomy" id="411154"/>
    <lineage>
        <taxon>Bacteria</taxon>
        <taxon>Pseudomonadati</taxon>
        <taxon>Bacteroidota</taxon>
        <taxon>Flavobacteriia</taxon>
        <taxon>Flavobacteriales</taxon>
        <taxon>Flavobacteriaceae</taxon>
        <taxon>Christiangramia</taxon>
    </lineage>
</organism>
<comment type="function">
    <text evidence="1">Acts as a chaperone.</text>
</comment>
<comment type="induction">
    <text evidence="1">By stress conditions e.g. heat shock.</text>
</comment>
<comment type="similarity">
    <text evidence="1">Belongs to the heat shock protein 70 family.</text>
</comment>
<gene>
    <name evidence="1" type="primary">dnaK</name>
    <name type="ordered locus">GFO_2083</name>
</gene>
<reference key="1">
    <citation type="journal article" date="2006" name="Environ. Microbiol.">
        <title>Whole genome analysis of the marine Bacteroidetes'Gramella forsetii' reveals adaptations to degradation of polymeric organic matter.</title>
        <authorList>
            <person name="Bauer M."/>
            <person name="Kube M."/>
            <person name="Teeling H."/>
            <person name="Richter M."/>
            <person name="Lombardot T."/>
            <person name="Allers E."/>
            <person name="Wuerdemann C.A."/>
            <person name="Quast C."/>
            <person name="Kuhl H."/>
            <person name="Knaust F."/>
            <person name="Woebken D."/>
            <person name="Bischof K."/>
            <person name="Mussmann M."/>
            <person name="Choudhuri J.V."/>
            <person name="Meyer F."/>
            <person name="Reinhardt R."/>
            <person name="Amann R.I."/>
            <person name="Gloeckner F.O."/>
        </authorList>
    </citation>
    <scope>NUCLEOTIDE SEQUENCE [LARGE SCALE GENOMIC DNA]</scope>
    <source>
        <strain>DSM 17595 / CGMCC 1.15422 / KT0803</strain>
    </source>
</reference>
<proteinExistence type="inferred from homology"/>